<proteinExistence type="inferred from homology"/>
<dbReference type="EMBL" id="AE016853">
    <property type="protein sequence ID" value="AAO53640.1"/>
    <property type="molecule type" value="Genomic_DNA"/>
</dbReference>
<dbReference type="RefSeq" id="NP_789945.1">
    <property type="nucleotide sequence ID" value="NC_004578.1"/>
</dbReference>
<dbReference type="SMR" id="Q88BD1"/>
<dbReference type="STRING" id="223283.PSPTO_0086"/>
<dbReference type="GeneID" id="1181694"/>
<dbReference type="KEGG" id="pst:PSPTO_0086"/>
<dbReference type="PATRIC" id="fig|223283.9.peg.90"/>
<dbReference type="eggNOG" id="COG2003">
    <property type="taxonomic scope" value="Bacteria"/>
</dbReference>
<dbReference type="HOGENOM" id="CLU_073529_0_1_6"/>
<dbReference type="OrthoDB" id="9804482at2"/>
<dbReference type="PhylomeDB" id="Q88BD1"/>
<dbReference type="Proteomes" id="UP000002515">
    <property type="component" value="Chromosome"/>
</dbReference>
<dbReference type="GO" id="GO:0046872">
    <property type="term" value="F:metal ion binding"/>
    <property type="evidence" value="ECO:0007669"/>
    <property type="project" value="UniProtKB-KW"/>
</dbReference>
<dbReference type="GO" id="GO:0008237">
    <property type="term" value="F:metallopeptidase activity"/>
    <property type="evidence" value="ECO:0007669"/>
    <property type="project" value="UniProtKB-KW"/>
</dbReference>
<dbReference type="GO" id="GO:0006508">
    <property type="term" value="P:proteolysis"/>
    <property type="evidence" value="ECO:0007669"/>
    <property type="project" value="UniProtKB-KW"/>
</dbReference>
<dbReference type="CDD" id="cd08071">
    <property type="entry name" value="MPN_DUF2466"/>
    <property type="match status" value="1"/>
</dbReference>
<dbReference type="FunFam" id="3.40.140.10:FF:000032">
    <property type="entry name" value="DNA repair protein RadC"/>
    <property type="match status" value="1"/>
</dbReference>
<dbReference type="Gene3D" id="3.40.140.10">
    <property type="entry name" value="Cytidine Deaminase, domain 2"/>
    <property type="match status" value="1"/>
</dbReference>
<dbReference type="InterPro" id="IPR037518">
    <property type="entry name" value="MPN"/>
</dbReference>
<dbReference type="InterPro" id="IPR025657">
    <property type="entry name" value="RadC_JAB"/>
</dbReference>
<dbReference type="InterPro" id="IPR010994">
    <property type="entry name" value="RuvA_2-like"/>
</dbReference>
<dbReference type="InterPro" id="IPR001405">
    <property type="entry name" value="UPF0758"/>
</dbReference>
<dbReference type="InterPro" id="IPR020891">
    <property type="entry name" value="UPF0758_CS"/>
</dbReference>
<dbReference type="InterPro" id="IPR046778">
    <property type="entry name" value="UPF0758_N"/>
</dbReference>
<dbReference type="NCBIfam" id="NF000642">
    <property type="entry name" value="PRK00024.1"/>
    <property type="match status" value="1"/>
</dbReference>
<dbReference type="NCBIfam" id="TIGR00608">
    <property type="entry name" value="radc"/>
    <property type="match status" value="1"/>
</dbReference>
<dbReference type="PANTHER" id="PTHR30471">
    <property type="entry name" value="DNA REPAIR PROTEIN RADC"/>
    <property type="match status" value="1"/>
</dbReference>
<dbReference type="PANTHER" id="PTHR30471:SF3">
    <property type="entry name" value="UPF0758 PROTEIN YEES-RELATED"/>
    <property type="match status" value="1"/>
</dbReference>
<dbReference type="Pfam" id="PF04002">
    <property type="entry name" value="RadC"/>
    <property type="match status" value="1"/>
</dbReference>
<dbReference type="Pfam" id="PF20582">
    <property type="entry name" value="UPF0758_N"/>
    <property type="match status" value="1"/>
</dbReference>
<dbReference type="SUPFAM" id="SSF102712">
    <property type="entry name" value="JAB1/MPN domain"/>
    <property type="match status" value="1"/>
</dbReference>
<dbReference type="SUPFAM" id="SSF47781">
    <property type="entry name" value="RuvA domain 2-like"/>
    <property type="match status" value="1"/>
</dbReference>
<dbReference type="PROSITE" id="PS50249">
    <property type="entry name" value="MPN"/>
    <property type="match status" value="1"/>
</dbReference>
<dbReference type="PROSITE" id="PS01302">
    <property type="entry name" value="UPF0758"/>
    <property type="match status" value="1"/>
</dbReference>
<accession>Q88BD1</accession>
<protein>
    <recommendedName>
        <fullName>UPF0758 protein PSPTO_0086</fullName>
    </recommendedName>
</protein>
<name>Y086_PSESM</name>
<sequence>MSIRSWPAAERPRERLLELGAASLSDAELLAIFLRTGVAGKSAVDLARHLLNQFDGLRSLLDADQPAFTAQLGLGPAKFAQLQAVMEMARRHMAESLRRDSALENPAQVRNYLKAQLRHEPHEVFACLFLDNKHRVMTFEILFRGTINASYVHPRQVVKRALAHNAASLILCHNHPSGITTPSRSDIDLTKRLKEALKLVDVHVLDHVIVGDGEPLSMVEKGLM</sequence>
<keyword id="KW-0378">Hydrolase</keyword>
<keyword id="KW-0479">Metal-binding</keyword>
<keyword id="KW-0482">Metalloprotease</keyword>
<keyword id="KW-0645">Protease</keyword>
<keyword id="KW-1185">Reference proteome</keyword>
<keyword id="KW-0862">Zinc</keyword>
<reference key="1">
    <citation type="journal article" date="2003" name="Proc. Natl. Acad. Sci. U.S.A.">
        <title>The complete genome sequence of the Arabidopsis and tomato pathogen Pseudomonas syringae pv. tomato DC3000.</title>
        <authorList>
            <person name="Buell C.R."/>
            <person name="Joardar V."/>
            <person name="Lindeberg M."/>
            <person name="Selengut J."/>
            <person name="Paulsen I.T."/>
            <person name="Gwinn M.L."/>
            <person name="Dodson R.J."/>
            <person name="DeBoy R.T."/>
            <person name="Durkin A.S."/>
            <person name="Kolonay J.F."/>
            <person name="Madupu R."/>
            <person name="Daugherty S.C."/>
            <person name="Brinkac L.M."/>
            <person name="Beanan M.J."/>
            <person name="Haft D.H."/>
            <person name="Nelson W.C."/>
            <person name="Davidsen T.M."/>
            <person name="Zafar N."/>
            <person name="Zhou L."/>
            <person name="Liu J."/>
            <person name="Yuan Q."/>
            <person name="Khouri H.M."/>
            <person name="Fedorova N.B."/>
            <person name="Tran B."/>
            <person name="Russell D."/>
            <person name="Berry K.J."/>
            <person name="Utterback T.R."/>
            <person name="Van Aken S.E."/>
            <person name="Feldblyum T.V."/>
            <person name="D'Ascenzo M."/>
            <person name="Deng W.-L."/>
            <person name="Ramos A.R."/>
            <person name="Alfano J.R."/>
            <person name="Cartinhour S."/>
            <person name="Chatterjee A.K."/>
            <person name="Delaney T.P."/>
            <person name="Lazarowitz S.G."/>
            <person name="Martin G.B."/>
            <person name="Schneider D.J."/>
            <person name="Tang X."/>
            <person name="Bender C.L."/>
            <person name="White O."/>
            <person name="Fraser C.M."/>
            <person name="Collmer A."/>
        </authorList>
    </citation>
    <scope>NUCLEOTIDE SEQUENCE [LARGE SCALE GENOMIC DNA]</scope>
    <source>
        <strain>ATCC BAA-871 / DC3000</strain>
    </source>
</reference>
<comment type="similarity">
    <text evidence="2">Belongs to the UPF0758 family.</text>
</comment>
<gene>
    <name type="ordered locus">PSPTO_0086</name>
</gene>
<evidence type="ECO:0000255" key="1">
    <source>
        <dbReference type="PROSITE-ProRule" id="PRU01182"/>
    </source>
</evidence>
<evidence type="ECO:0000305" key="2"/>
<organism>
    <name type="scientific">Pseudomonas syringae pv. tomato (strain ATCC BAA-871 / DC3000)</name>
    <dbReference type="NCBI Taxonomy" id="223283"/>
    <lineage>
        <taxon>Bacteria</taxon>
        <taxon>Pseudomonadati</taxon>
        <taxon>Pseudomonadota</taxon>
        <taxon>Gammaproteobacteria</taxon>
        <taxon>Pseudomonadales</taxon>
        <taxon>Pseudomonadaceae</taxon>
        <taxon>Pseudomonas</taxon>
    </lineage>
</organism>
<feature type="chain" id="PRO_0000190719" description="UPF0758 protein PSPTO_0086">
    <location>
        <begin position="1"/>
        <end position="224"/>
    </location>
</feature>
<feature type="domain" description="MPN" evidence="1">
    <location>
        <begin position="102"/>
        <end position="224"/>
    </location>
</feature>
<feature type="short sequence motif" description="JAMM motif" evidence="1">
    <location>
        <begin position="173"/>
        <end position="186"/>
    </location>
</feature>
<feature type="binding site" evidence="1">
    <location>
        <position position="173"/>
    </location>
    <ligand>
        <name>Zn(2+)</name>
        <dbReference type="ChEBI" id="CHEBI:29105"/>
        <note>catalytic</note>
    </ligand>
</feature>
<feature type="binding site" evidence="1">
    <location>
        <position position="175"/>
    </location>
    <ligand>
        <name>Zn(2+)</name>
        <dbReference type="ChEBI" id="CHEBI:29105"/>
        <note>catalytic</note>
    </ligand>
</feature>
<feature type="binding site" evidence="1">
    <location>
        <position position="186"/>
    </location>
    <ligand>
        <name>Zn(2+)</name>
        <dbReference type="ChEBI" id="CHEBI:29105"/>
        <note>catalytic</note>
    </ligand>
</feature>